<keyword id="KW-0378">Hydrolase</keyword>
<keyword id="KW-0442">Lipid degradation</keyword>
<keyword id="KW-0443">Lipid metabolism</keyword>
<keyword id="KW-1185">Reference proteome</keyword>
<sequence>MPAPAALRVRGSSSPRVALALGSGGARGYAHIGVIQALRERGYDIVGIAGSSMGAVVGGVHAAGRLDEFAHWAKSLTQRTILRLLDPSISAAGILRAEKILDAVRDIVGPVAIEQLPIPYTAVATDLLAGKSVWFQRGPLDAAIRASIAIPGVIAPHEVDGRLLADGGILDPLPMAPIAGVNADLTIAVSLNGSEAGPARDAEPNVTAEWLNRMVRSTSALFDVSAARSLLDRPTARAVLSRFGAAAAESDSWSQAPEIEQRPAGPPADREEAADTPGLPKMGSFEVMNRTIDIAQSALARHTLAGYPADLLIEVPRSTCRSLEFHRAVEVIAVGRALATQALEAFEIDDDESAAATIEG</sequence>
<name>Y1063_MYCTU</name>
<evidence type="ECO:0000255" key="1">
    <source>
        <dbReference type="PROSITE-ProRule" id="PRU01161"/>
    </source>
</evidence>
<evidence type="ECO:0000256" key="2">
    <source>
        <dbReference type="SAM" id="MobiDB-lite"/>
    </source>
</evidence>
<evidence type="ECO:0000305" key="3"/>
<gene>
    <name type="ordered locus">Rv1063c</name>
    <name type="ORF">MTV017.16c</name>
</gene>
<dbReference type="EMBL" id="AL123456">
    <property type="protein sequence ID" value="CCP43814.1"/>
    <property type="molecule type" value="Genomic_DNA"/>
</dbReference>
<dbReference type="PIR" id="E70892">
    <property type="entry name" value="E70892"/>
</dbReference>
<dbReference type="RefSeq" id="NP_215579.1">
    <property type="nucleotide sequence ID" value="NC_000962.3"/>
</dbReference>
<dbReference type="RefSeq" id="WP_003405642.1">
    <property type="nucleotide sequence ID" value="NZ_NVQJ01000060.1"/>
</dbReference>
<dbReference type="SMR" id="P9WIY9"/>
<dbReference type="STRING" id="83332.Rv1063c"/>
<dbReference type="PaxDb" id="83332-Rv1063c"/>
<dbReference type="DNASU" id="887128"/>
<dbReference type="GeneID" id="887128"/>
<dbReference type="KEGG" id="mtu:Rv1063c"/>
<dbReference type="KEGG" id="mtv:RVBD_1063c"/>
<dbReference type="TubercuList" id="Rv1063c"/>
<dbReference type="eggNOG" id="COG1752">
    <property type="taxonomic scope" value="Bacteria"/>
</dbReference>
<dbReference type="InParanoid" id="P9WIY9"/>
<dbReference type="OrthoDB" id="5290098at2"/>
<dbReference type="PhylomeDB" id="P9WIY9"/>
<dbReference type="Proteomes" id="UP000001584">
    <property type="component" value="Chromosome"/>
</dbReference>
<dbReference type="GO" id="GO:0004622">
    <property type="term" value="F:lysophospholipase activity"/>
    <property type="evidence" value="ECO:0007669"/>
    <property type="project" value="InterPro"/>
</dbReference>
<dbReference type="GO" id="GO:0016042">
    <property type="term" value="P:lipid catabolic process"/>
    <property type="evidence" value="ECO:0007669"/>
    <property type="project" value="UniProtKB-KW"/>
</dbReference>
<dbReference type="GO" id="GO:0046470">
    <property type="term" value="P:phosphatidylcholine metabolic process"/>
    <property type="evidence" value="ECO:0007669"/>
    <property type="project" value="InterPro"/>
</dbReference>
<dbReference type="CDD" id="cd07228">
    <property type="entry name" value="Pat_NTE_like_bacteria"/>
    <property type="match status" value="1"/>
</dbReference>
<dbReference type="Gene3D" id="3.40.1090.10">
    <property type="entry name" value="Cytosolic phospholipase A2 catalytic domain"/>
    <property type="match status" value="2"/>
</dbReference>
<dbReference type="InterPro" id="IPR016035">
    <property type="entry name" value="Acyl_Trfase/lysoPLipase"/>
</dbReference>
<dbReference type="InterPro" id="IPR001423">
    <property type="entry name" value="LysoPLipase_patatin_CS"/>
</dbReference>
<dbReference type="InterPro" id="IPR050301">
    <property type="entry name" value="NTE"/>
</dbReference>
<dbReference type="InterPro" id="IPR002641">
    <property type="entry name" value="PNPLA_dom"/>
</dbReference>
<dbReference type="PANTHER" id="PTHR14226">
    <property type="entry name" value="NEUROPATHY TARGET ESTERASE/SWISS CHEESE D.MELANOGASTER"/>
    <property type="match status" value="1"/>
</dbReference>
<dbReference type="PANTHER" id="PTHR14226:SF76">
    <property type="entry name" value="NTE FAMILY PROTEIN RSSA"/>
    <property type="match status" value="1"/>
</dbReference>
<dbReference type="Pfam" id="PF01734">
    <property type="entry name" value="Patatin"/>
    <property type="match status" value="1"/>
</dbReference>
<dbReference type="SUPFAM" id="SSF52151">
    <property type="entry name" value="FabD/lysophospholipase-like"/>
    <property type="match status" value="1"/>
</dbReference>
<dbReference type="PROSITE" id="PS51635">
    <property type="entry name" value="PNPLA"/>
    <property type="match status" value="1"/>
</dbReference>
<dbReference type="PROSITE" id="PS01237">
    <property type="entry name" value="UPF0028"/>
    <property type="match status" value="1"/>
</dbReference>
<proteinExistence type="evidence at protein level"/>
<feature type="chain" id="PRO_0000172534" description="Uncharacterized NTE family protein Rv1063c">
    <location>
        <begin position="1"/>
        <end position="360"/>
    </location>
</feature>
<feature type="domain" description="PNPLA" evidence="1">
    <location>
        <begin position="19"/>
        <end position="179"/>
    </location>
</feature>
<feature type="region of interest" description="Disordered" evidence="2">
    <location>
        <begin position="251"/>
        <end position="282"/>
    </location>
</feature>
<feature type="short sequence motif" description="GXSXG" evidence="1">
    <location>
        <begin position="50"/>
        <end position="54"/>
    </location>
</feature>
<feature type="short sequence motif" description="DGA/G" evidence="1">
    <location>
        <begin position="166"/>
        <end position="168"/>
    </location>
</feature>
<feature type="active site" description="Nucleophile" evidence="1">
    <location>
        <position position="52"/>
    </location>
</feature>
<feature type="active site" description="Proton acceptor" evidence="1">
    <location>
        <position position="166"/>
    </location>
</feature>
<reference key="1">
    <citation type="journal article" date="1998" name="Nature">
        <title>Deciphering the biology of Mycobacterium tuberculosis from the complete genome sequence.</title>
        <authorList>
            <person name="Cole S.T."/>
            <person name="Brosch R."/>
            <person name="Parkhill J."/>
            <person name="Garnier T."/>
            <person name="Churcher C.M."/>
            <person name="Harris D.E."/>
            <person name="Gordon S.V."/>
            <person name="Eiglmeier K."/>
            <person name="Gas S."/>
            <person name="Barry C.E. III"/>
            <person name="Tekaia F."/>
            <person name="Badcock K."/>
            <person name="Basham D."/>
            <person name="Brown D."/>
            <person name="Chillingworth T."/>
            <person name="Connor R."/>
            <person name="Davies R.M."/>
            <person name="Devlin K."/>
            <person name="Feltwell T."/>
            <person name="Gentles S."/>
            <person name="Hamlin N."/>
            <person name="Holroyd S."/>
            <person name="Hornsby T."/>
            <person name="Jagels K."/>
            <person name="Krogh A."/>
            <person name="McLean J."/>
            <person name="Moule S."/>
            <person name="Murphy L.D."/>
            <person name="Oliver S."/>
            <person name="Osborne J."/>
            <person name="Quail M.A."/>
            <person name="Rajandream M.A."/>
            <person name="Rogers J."/>
            <person name="Rutter S."/>
            <person name="Seeger K."/>
            <person name="Skelton S."/>
            <person name="Squares S."/>
            <person name="Squares R."/>
            <person name="Sulston J.E."/>
            <person name="Taylor K."/>
            <person name="Whitehead S."/>
            <person name="Barrell B.G."/>
        </authorList>
    </citation>
    <scope>NUCLEOTIDE SEQUENCE [LARGE SCALE GENOMIC DNA]</scope>
    <source>
        <strain>ATCC 25618 / H37Rv</strain>
    </source>
</reference>
<reference key="2">
    <citation type="journal article" date="2011" name="Mol. Cell. Proteomics">
        <title>Proteogenomic analysis of Mycobacterium tuberculosis by high resolution mass spectrometry.</title>
        <authorList>
            <person name="Kelkar D.S."/>
            <person name="Kumar D."/>
            <person name="Kumar P."/>
            <person name="Balakrishnan L."/>
            <person name="Muthusamy B."/>
            <person name="Yadav A.K."/>
            <person name="Shrivastava P."/>
            <person name="Marimuthu A."/>
            <person name="Anand S."/>
            <person name="Sundaram H."/>
            <person name="Kingsbury R."/>
            <person name="Harsha H.C."/>
            <person name="Nair B."/>
            <person name="Prasad T.S."/>
            <person name="Chauhan D.S."/>
            <person name="Katoch K."/>
            <person name="Katoch V.M."/>
            <person name="Kumar P."/>
            <person name="Chaerkady R."/>
            <person name="Ramachandran S."/>
            <person name="Dash D."/>
            <person name="Pandey A."/>
        </authorList>
    </citation>
    <scope>IDENTIFICATION BY MASS SPECTROMETRY [LARGE SCALE ANALYSIS]</scope>
    <source>
        <strain>ATCC 25618 / H37Rv</strain>
    </source>
</reference>
<protein>
    <recommendedName>
        <fullName>Uncharacterized NTE family protein Rv1063c</fullName>
    </recommendedName>
</protein>
<comment type="similarity">
    <text evidence="3">Belongs to the NTE family.</text>
</comment>
<organism>
    <name type="scientific">Mycobacterium tuberculosis (strain ATCC 25618 / H37Rv)</name>
    <dbReference type="NCBI Taxonomy" id="83332"/>
    <lineage>
        <taxon>Bacteria</taxon>
        <taxon>Bacillati</taxon>
        <taxon>Actinomycetota</taxon>
        <taxon>Actinomycetes</taxon>
        <taxon>Mycobacteriales</taxon>
        <taxon>Mycobacteriaceae</taxon>
        <taxon>Mycobacterium</taxon>
        <taxon>Mycobacterium tuberculosis complex</taxon>
    </lineage>
</organism>
<accession>P9WIY9</accession>
<accession>L0T771</accession>
<accession>O53411</accession>
<accession>P67098</accession>